<name>UBP11_ARATH</name>
<comment type="function">
    <text evidence="1">Recognizes and hydrolyzes the peptide bond at the C-terminal Gly of ubiquitin. Involved in the processing of poly-ubiquitin precursors as well as that of ubiquitinated proteins (By similarity).</text>
</comment>
<comment type="catalytic activity">
    <reaction>
        <text>Thiol-dependent hydrolysis of ester, thioester, amide, peptide and isopeptide bonds formed by the C-terminal Gly of ubiquitin (a 76-residue protein attached to proteins as an intracellular targeting signal).</text>
        <dbReference type="EC" id="3.4.19.12"/>
    </reaction>
</comment>
<comment type="similarity">
    <text evidence="6">Belongs to the peptidase C19 family.</text>
</comment>
<comment type="sequence caution" evidence="6">
    <conflict type="erroneous gene model prediction">
        <sequence resource="EMBL-CDS" id="AAF31287"/>
    </conflict>
</comment>
<organism>
    <name type="scientific">Arabidopsis thaliana</name>
    <name type="common">Mouse-ear cress</name>
    <dbReference type="NCBI Taxonomy" id="3702"/>
    <lineage>
        <taxon>Eukaryota</taxon>
        <taxon>Viridiplantae</taxon>
        <taxon>Streptophyta</taxon>
        <taxon>Embryophyta</taxon>
        <taxon>Tracheophyta</taxon>
        <taxon>Spermatophyta</taxon>
        <taxon>Magnoliopsida</taxon>
        <taxon>eudicotyledons</taxon>
        <taxon>Gunneridae</taxon>
        <taxon>Pentapetalae</taxon>
        <taxon>rosids</taxon>
        <taxon>malvids</taxon>
        <taxon>Brassicales</taxon>
        <taxon>Brassicaceae</taxon>
        <taxon>Camelineae</taxon>
        <taxon>Arabidopsis</taxon>
    </lineage>
</organism>
<dbReference type="EC" id="3.4.19.12"/>
<dbReference type="EMBL" id="AC006424">
    <property type="protein sequence ID" value="AAF31287.1"/>
    <property type="status" value="ALT_SEQ"/>
    <property type="molecule type" value="Genomic_DNA"/>
</dbReference>
<dbReference type="EMBL" id="CP002684">
    <property type="protein sequence ID" value="AEE31532.1"/>
    <property type="molecule type" value="Genomic_DNA"/>
</dbReference>
<dbReference type="PIR" id="C86453">
    <property type="entry name" value="C86453"/>
</dbReference>
<dbReference type="RefSeq" id="NP_174562.2">
    <property type="nucleotide sequence ID" value="NM_103019.3"/>
</dbReference>
<dbReference type="SMR" id="Q9MAQ3"/>
<dbReference type="FunCoup" id="Q9MAQ3">
    <property type="interactions" value="3348"/>
</dbReference>
<dbReference type="STRING" id="3702.Q9MAQ3"/>
<dbReference type="MEROPS" id="C19.A04"/>
<dbReference type="PaxDb" id="3702-AT1G32850.1"/>
<dbReference type="ProteomicsDB" id="234127"/>
<dbReference type="EnsemblPlants" id="AT1G32850.1">
    <property type="protein sequence ID" value="AT1G32850.1"/>
    <property type="gene ID" value="AT1G32850"/>
</dbReference>
<dbReference type="GeneID" id="840179"/>
<dbReference type="Gramene" id="AT1G32850.1">
    <property type="protein sequence ID" value="AT1G32850.1"/>
    <property type="gene ID" value="AT1G32850"/>
</dbReference>
<dbReference type="KEGG" id="ath:AT1G32850"/>
<dbReference type="Araport" id="AT1G32850"/>
<dbReference type="TAIR" id="AT1G32850">
    <property type="gene designation" value="UBP11"/>
</dbReference>
<dbReference type="eggNOG" id="KOG1870">
    <property type="taxonomic scope" value="Eukaryota"/>
</dbReference>
<dbReference type="HOGENOM" id="CLU_001060_7_1_1"/>
<dbReference type="InParanoid" id="Q9MAQ3"/>
<dbReference type="OMA" id="QLYEMVC"/>
<dbReference type="PhylomeDB" id="Q9MAQ3"/>
<dbReference type="PRO" id="PR:Q9MAQ3"/>
<dbReference type="Proteomes" id="UP000006548">
    <property type="component" value="Chromosome 1"/>
</dbReference>
<dbReference type="ExpressionAtlas" id="Q9MAQ3">
    <property type="expression patterns" value="baseline and differential"/>
</dbReference>
<dbReference type="GO" id="GO:0004843">
    <property type="term" value="F:cysteine-type deubiquitinase activity"/>
    <property type="evidence" value="ECO:0007669"/>
    <property type="project" value="UniProtKB-EC"/>
</dbReference>
<dbReference type="GO" id="GO:0016579">
    <property type="term" value="P:protein deubiquitination"/>
    <property type="evidence" value="ECO:0007669"/>
    <property type="project" value="InterPro"/>
</dbReference>
<dbReference type="GO" id="GO:0006508">
    <property type="term" value="P:proteolysis"/>
    <property type="evidence" value="ECO:0007669"/>
    <property type="project" value="UniProtKB-KW"/>
</dbReference>
<dbReference type="CDD" id="cd02674">
    <property type="entry name" value="Peptidase_C19R"/>
    <property type="match status" value="1"/>
</dbReference>
<dbReference type="Gene3D" id="3.90.70.10">
    <property type="entry name" value="Cysteine proteinases"/>
    <property type="match status" value="2"/>
</dbReference>
<dbReference type="Gene3D" id="3.30.2230.10">
    <property type="entry name" value="DUSP-like"/>
    <property type="match status" value="1"/>
</dbReference>
<dbReference type="Gene3D" id="3.10.20.90">
    <property type="entry name" value="Phosphatidylinositol 3-kinase Catalytic Subunit, Chain A, domain 1"/>
    <property type="match status" value="1"/>
</dbReference>
<dbReference type="InterPro" id="IPR035927">
    <property type="entry name" value="DUSP-like_sf"/>
</dbReference>
<dbReference type="InterPro" id="IPR038765">
    <property type="entry name" value="Papain-like_cys_pep_sf"/>
</dbReference>
<dbReference type="InterPro" id="IPR006615">
    <property type="entry name" value="Pept_C19_DUSP"/>
</dbReference>
<dbReference type="InterPro" id="IPR001394">
    <property type="entry name" value="Peptidase_C19_UCH"/>
</dbReference>
<dbReference type="InterPro" id="IPR050185">
    <property type="entry name" value="Ub_carboxyl-term_hydrolase"/>
</dbReference>
<dbReference type="InterPro" id="IPR018200">
    <property type="entry name" value="USP_CS"/>
</dbReference>
<dbReference type="InterPro" id="IPR028889">
    <property type="entry name" value="USP_dom"/>
</dbReference>
<dbReference type="PANTHER" id="PTHR21646">
    <property type="entry name" value="UBIQUITIN CARBOXYL-TERMINAL HYDROLASE"/>
    <property type="match status" value="1"/>
</dbReference>
<dbReference type="PANTHER" id="PTHR21646:SF83">
    <property type="entry name" value="UBIQUITIN CARBOXYL-TERMINAL HYDROLASE 11-RELATED"/>
    <property type="match status" value="1"/>
</dbReference>
<dbReference type="Pfam" id="PF06337">
    <property type="entry name" value="DUSP"/>
    <property type="match status" value="1"/>
</dbReference>
<dbReference type="Pfam" id="PF00443">
    <property type="entry name" value="UCH"/>
    <property type="match status" value="1"/>
</dbReference>
<dbReference type="SMART" id="SM00695">
    <property type="entry name" value="DUSP"/>
    <property type="match status" value="1"/>
</dbReference>
<dbReference type="SUPFAM" id="SSF54001">
    <property type="entry name" value="Cysteine proteinases"/>
    <property type="match status" value="1"/>
</dbReference>
<dbReference type="SUPFAM" id="SSF143791">
    <property type="entry name" value="DUSP-like"/>
    <property type="match status" value="1"/>
</dbReference>
<dbReference type="PROSITE" id="PS51283">
    <property type="entry name" value="DUSP"/>
    <property type="match status" value="1"/>
</dbReference>
<dbReference type="PROSITE" id="PS00972">
    <property type="entry name" value="USP_1"/>
    <property type="match status" value="1"/>
</dbReference>
<dbReference type="PROSITE" id="PS00973">
    <property type="entry name" value="USP_2"/>
    <property type="match status" value="1"/>
</dbReference>
<dbReference type="PROSITE" id="PS50235">
    <property type="entry name" value="USP_3"/>
    <property type="match status" value="1"/>
</dbReference>
<sequence length="892" mass="101175">MTLITDSESIGVCESSYTPEEERRIVTELNNEAEADLKEGNLYFVISNRWYTRWQRFVGLLTEEFRSGEPSEVTRPGPIDNHDIIDSESDASDPQLRMMLEEGVDYTLVQQEVWRKLVKWYKGGPPVPRKLISQGFYTKSFSVEVYLLCLTLTDSRDESTTIIRLSKQASIGQLYEMVCAGKGVAKEKARIWDYFEKKKSVLLDPSSEQSVEEAGLQFNQDILLEVDGSASSQFVMSLAENELAMVPLEPMRSDAMDIVRGGGTLSNGHSNGFKFSFFGRNTFKDDVSSRTFGKGEKRGLGGLQNLGNTCFMNSTLQCLAHTPPIVEYFLQDYRSDINAKNPLGMRGELAIAFGELLRKLWSSGQNTVAPRAFKTKLARFAPQFSGYNQHDSQEMLAFLLDGLHEDLNKVKRKPYIEAKDSDGRPDDEVAEEKWKYHKARNDSVIVDVFQGQYKSTLVCPDCGKISITFDPFMYLSLPLPSSRTRSMTVTVFYGDGSHLPMPYTVTVPKDGSCRDLSNALGTACCLDNDESLLLAEVYDHKVFKYYENPRELLNGIKDNEHIVAYRFKQMHKGPGKVKLEILHGEQEKSSDRGPKCFGTPLVTYINKEPLSGTDIATSISGLLSPLRRVHMSCVVNSGNENGHVPDESSRSILSRDTETEDNDRELSLSLLRDYYSFNLQPLESDSVVNPGSVTKVLVKWNEKEHEKYDSSYLNDLPKVHKNVLAKKTMQEGISLFSCLEAFLAEEPLGPDDMWYCPGCKEHRQANKKLDLWKLPDILVFHLKRFTYSRYFKNKIDTLVNFHIHDLDLSKYVKNEDGQSYLYELYAISNHYGGLGGGHYTAYAKLMDETKWYNFDDSRVSAVNESEIKTSAAYVLFYQRVKSDSETSDMKMD</sequence>
<accession>Q9MAQ3</accession>
<proteinExistence type="inferred from homology"/>
<reference key="1">
    <citation type="journal article" date="2000" name="Nature">
        <title>Sequence and analysis of chromosome 1 of the plant Arabidopsis thaliana.</title>
        <authorList>
            <person name="Theologis A."/>
            <person name="Ecker J.R."/>
            <person name="Palm C.J."/>
            <person name="Federspiel N.A."/>
            <person name="Kaul S."/>
            <person name="White O."/>
            <person name="Alonso J."/>
            <person name="Altafi H."/>
            <person name="Araujo R."/>
            <person name="Bowman C.L."/>
            <person name="Brooks S.Y."/>
            <person name="Buehler E."/>
            <person name="Chan A."/>
            <person name="Chao Q."/>
            <person name="Chen H."/>
            <person name="Cheuk R.F."/>
            <person name="Chin C.W."/>
            <person name="Chung M.K."/>
            <person name="Conn L."/>
            <person name="Conway A.B."/>
            <person name="Conway A.R."/>
            <person name="Creasy T.H."/>
            <person name="Dewar K."/>
            <person name="Dunn P."/>
            <person name="Etgu P."/>
            <person name="Feldblyum T.V."/>
            <person name="Feng J.-D."/>
            <person name="Fong B."/>
            <person name="Fujii C.Y."/>
            <person name="Gill J.E."/>
            <person name="Goldsmith A.D."/>
            <person name="Haas B."/>
            <person name="Hansen N.F."/>
            <person name="Hughes B."/>
            <person name="Huizar L."/>
            <person name="Hunter J.L."/>
            <person name="Jenkins J."/>
            <person name="Johnson-Hopson C."/>
            <person name="Khan S."/>
            <person name="Khaykin E."/>
            <person name="Kim C.J."/>
            <person name="Koo H.L."/>
            <person name="Kremenetskaia I."/>
            <person name="Kurtz D.B."/>
            <person name="Kwan A."/>
            <person name="Lam B."/>
            <person name="Langin-Hooper S."/>
            <person name="Lee A."/>
            <person name="Lee J.M."/>
            <person name="Lenz C.A."/>
            <person name="Li J.H."/>
            <person name="Li Y.-P."/>
            <person name="Lin X."/>
            <person name="Liu S.X."/>
            <person name="Liu Z.A."/>
            <person name="Luros J.S."/>
            <person name="Maiti R."/>
            <person name="Marziali A."/>
            <person name="Militscher J."/>
            <person name="Miranda M."/>
            <person name="Nguyen M."/>
            <person name="Nierman W.C."/>
            <person name="Osborne B.I."/>
            <person name="Pai G."/>
            <person name="Peterson J."/>
            <person name="Pham P.K."/>
            <person name="Rizzo M."/>
            <person name="Rooney T."/>
            <person name="Rowley D."/>
            <person name="Sakano H."/>
            <person name="Salzberg S.L."/>
            <person name="Schwartz J.R."/>
            <person name="Shinn P."/>
            <person name="Southwick A.M."/>
            <person name="Sun H."/>
            <person name="Tallon L.J."/>
            <person name="Tambunga G."/>
            <person name="Toriumi M.J."/>
            <person name="Town C.D."/>
            <person name="Utterback T."/>
            <person name="Van Aken S."/>
            <person name="Vaysberg M."/>
            <person name="Vysotskaia V.S."/>
            <person name="Walker M."/>
            <person name="Wu D."/>
            <person name="Yu G."/>
            <person name="Fraser C.M."/>
            <person name="Venter J.C."/>
            <person name="Davis R.W."/>
        </authorList>
    </citation>
    <scope>NUCLEOTIDE SEQUENCE [LARGE SCALE GENOMIC DNA]</scope>
    <source>
        <strain>cv. Columbia</strain>
    </source>
</reference>
<reference key="2">
    <citation type="journal article" date="2017" name="Plant J.">
        <title>Araport11: a complete reannotation of the Arabidopsis thaliana reference genome.</title>
        <authorList>
            <person name="Cheng C.Y."/>
            <person name="Krishnakumar V."/>
            <person name="Chan A.P."/>
            <person name="Thibaud-Nissen F."/>
            <person name="Schobel S."/>
            <person name="Town C.D."/>
        </authorList>
    </citation>
    <scope>GENOME REANNOTATION</scope>
    <source>
        <strain>cv. Columbia</strain>
    </source>
</reference>
<reference key="3">
    <citation type="journal article" date="2000" name="Plant Physiol.">
        <title>The ubiquitin-specific protease family from Arabidopsis. AtUBP1 and 2 are required for the resistance to the amino acid analog canavanine.</title>
        <authorList>
            <person name="Yan N."/>
            <person name="Doelling J.H."/>
            <person name="Falbel T.G."/>
            <person name="Durski A.M."/>
            <person name="Vierstra R.D."/>
        </authorList>
    </citation>
    <scope>GENE FAMILY ORGANIZATION</scope>
    <scope>NOMENCLATURE</scope>
</reference>
<protein>
    <recommendedName>
        <fullName>Putative ubiquitin carboxyl-terminal hydrolase 11</fullName>
        <ecNumber>3.4.19.12</ecNumber>
    </recommendedName>
    <alternativeName>
        <fullName>Deubiquitinating enzyme 11</fullName>
        <shortName>AtUBP11</shortName>
    </alternativeName>
    <alternativeName>
        <fullName>Ubiquitin thioesterase 11</fullName>
    </alternativeName>
    <alternativeName>
        <fullName>Ubiquitin-specific-processing protease 11</fullName>
    </alternativeName>
</protein>
<keyword id="KW-0378">Hydrolase</keyword>
<keyword id="KW-0645">Protease</keyword>
<keyword id="KW-1185">Reference proteome</keyword>
<keyword id="KW-0788">Thiol protease</keyword>
<keyword id="KW-0833">Ubl conjugation pathway</keyword>
<feature type="chain" id="PRO_0000313038" description="Putative ubiquitin carboxyl-terminal hydrolase 11">
    <location>
        <begin position="1"/>
        <end position="892"/>
    </location>
</feature>
<feature type="domain" description="DUSP" evidence="2">
    <location>
        <begin position="17"/>
        <end position="132"/>
    </location>
</feature>
<feature type="domain" description="USP">
    <location>
        <begin position="301"/>
        <end position="880"/>
    </location>
</feature>
<feature type="region of interest" description="Disordered" evidence="5">
    <location>
        <begin position="69"/>
        <end position="89"/>
    </location>
</feature>
<feature type="region of interest" description="Disordered" evidence="5">
    <location>
        <begin position="636"/>
        <end position="660"/>
    </location>
</feature>
<feature type="compositionally biased region" description="Basic and acidic residues" evidence="5">
    <location>
        <begin position="643"/>
        <end position="657"/>
    </location>
</feature>
<feature type="active site" description="Nucleophile" evidence="3 4">
    <location>
        <position position="310"/>
    </location>
</feature>
<feature type="active site" description="Proton acceptor" evidence="3 4">
    <location>
        <position position="838"/>
    </location>
</feature>
<evidence type="ECO:0000250" key="1"/>
<evidence type="ECO:0000255" key="2">
    <source>
        <dbReference type="PROSITE-ProRule" id="PRU00613"/>
    </source>
</evidence>
<evidence type="ECO:0000255" key="3">
    <source>
        <dbReference type="PROSITE-ProRule" id="PRU10092"/>
    </source>
</evidence>
<evidence type="ECO:0000255" key="4">
    <source>
        <dbReference type="PROSITE-ProRule" id="PRU10093"/>
    </source>
</evidence>
<evidence type="ECO:0000256" key="5">
    <source>
        <dbReference type="SAM" id="MobiDB-lite"/>
    </source>
</evidence>
<evidence type="ECO:0000305" key="6"/>
<gene>
    <name type="primary">UBP11</name>
    <name type="ordered locus">At1g32850</name>
    <name type="ORF">F9L11.5</name>
</gene>